<feature type="chain" id="PRO_0000293363" description="Small ribosomal subunit protein uS4">
    <location>
        <begin position="1"/>
        <end position="206"/>
    </location>
</feature>
<feature type="domain" description="S4 RNA-binding" evidence="1">
    <location>
        <begin position="96"/>
        <end position="156"/>
    </location>
</feature>
<keyword id="KW-1185">Reference proteome</keyword>
<keyword id="KW-0687">Ribonucleoprotein</keyword>
<keyword id="KW-0689">Ribosomal protein</keyword>
<keyword id="KW-0694">RNA-binding</keyword>
<keyword id="KW-0699">rRNA-binding</keyword>
<comment type="function">
    <text evidence="1">One of the primary rRNA binding proteins, it binds directly to 16S rRNA where it nucleates assembly of the body of the 30S subunit.</text>
</comment>
<comment type="function">
    <text evidence="1">With S5 and S12 plays an important role in translational accuracy.</text>
</comment>
<comment type="subunit">
    <text evidence="1">Part of the 30S ribosomal subunit. Contacts protein S5. The interaction surface between S4 and S5 is involved in control of translational fidelity.</text>
</comment>
<comment type="similarity">
    <text evidence="1">Belongs to the universal ribosomal protein uS4 family.</text>
</comment>
<sequence>MARYLGPKLKLSRREGTDLFLKSGVRAIDSKCKLETAPGQHGARKPRLSEYGTQLREKQKVRRIYGVLEKQFRNYYKEAARLKGNTGENLLQLLETRLDNVVYRMGFGATRAESRQLVSHKTVLVNGRVVNIPSFKVSANDVVSIREKSRTQARIKASLEVAAQREKPTWVEVDNTKMEGAFKRLPERSDLSADINEQLIVELYSK</sequence>
<gene>
    <name evidence="1" type="primary">rpsD</name>
    <name type="ordered locus">Sden_0194</name>
</gene>
<name>RS4_SHEDO</name>
<proteinExistence type="inferred from homology"/>
<protein>
    <recommendedName>
        <fullName evidence="1">Small ribosomal subunit protein uS4</fullName>
    </recommendedName>
    <alternativeName>
        <fullName evidence="2">30S ribosomal protein S4</fullName>
    </alternativeName>
</protein>
<dbReference type="EMBL" id="CP000302">
    <property type="protein sequence ID" value="ABE53491.1"/>
    <property type="molecule type" value="Genomic_DNA"/>
</dbReference>
<dbReference type="RefSeq" id="WP_011494658.1">
    <property type="nucleotide sequence ID" value="NC_007954.1"/>
</dbReference>
<dbReference type="SMR" id="Q12ST5"/>
<dbReference type="STRING" id="318161.Sden_0194"/>
<dbReference type="KEGG" id="sdn:Sden_0194"/>
<dbReference type="eggNOG" id="COG0522">
    <property type="taxonomic scope" value="Bacteria"/>
</dbReference>
<dbReference type="HOGENOM" id="CLU_092403_0_2_6"/>
<dbReference type="OrthoDB" id="9803672at2"/>
<dbReference type="Proteomes" id="UP000001982">
    <property type="component" value="Chromosome"/>
</dbReference>
<dbReference type="GO" id="GO:0015935">
    <property type="term" value="C:small ribosomal subunit"/>
    <property type="evidence" value="ECO:0007669"/>
    <property type="project" value="InterPro"/>
</dbReference>
<dbReference type="GO" id="GO:0019843">
    <property type="term" value="F:rRNA binding"/>
    <property type="evidence" value="ECO:0007669"/>
    <property type="project" value="UniProtKB-UniRule"/>
</dbReference>
<dbReference type="GO" id="GO:0003735">
    <property type="term" value="F:structural constituent of ribosome"/>
    <property type="evidence" value="ECO:0007669"/>
    <property type="project" value="InterPro"/>
</dbReference>
<dbReference type="GO" id="GO:0042274">
    <property type="term" value="P:ribosomal small subunit biogenesis"/>
    <property type="evidence" value="ECO:0007669"/>
    <property type="project" value="TreeGrafter"/>
</dbReference>
<dbReference type="GO" id="GO:0006412">
    <property type="term" value="P:translation"/>
    <property type="evidence" value="ECO:0007669"/>
    <property type="project" value="UniProtKB-UniRule"/>
</dbReference>
<dbReference type="CDD" id="cd00165">
    <property type="entry name" value="S4"/>
    <property type="match status" value="1"/>
</dbReference>
<dbReference type="FunFam" id="1.10.1050.10:FF:000001">
    <property type="entry name" value="30S ribosomal protein S4"/>
    <property type="match status" value="1"/>
</dbReference>
<dbReference type="FunFam" id="3.10.290.10:FF:000001">
    <property type="entry name" value="30S ribosomal protein S4"/>
    <property type="match status" value="1"/>
</dbReference>
<dbReference type="Gene3D" id="1.10.1050.10">
    <property type="entry name" value="Ribosomal Protein S4 Delta 41, Chain A, domain 1"/>
    <property type="match status" value="1"/>
</dbReference>
<dbReference type="Gene3D" id="3.10.290.10">
    <property type="entry name" value="RNA-binding S4 domain"/>
    <property type="match status" value="1"/>
</dbReference>
<dbReference type="HAMAP" id="MF_01306_B">
    <property type="entry name" value="Ribosomal_uS4_B"/>
    <property type="match status" value="1"/>
</dbReference>
<dbReference type="InterPro" id="IPR022801">
    <property type="entry name" value="Ribosomal_uS4"/>
</dbReference>
<dbReference type="InterPro" id="IPR005709">
    <property type="entry name" value="Ribosomal_uS4_bac-type"/>
</dbReference>
<dbReference type="InterPro" id="IPR018079">
    <property type="entry name" value="Ribosomal_uS4_CS"/>
</dbReference>
<dbReference type="InterPro" id="IPR001912">
    <property type="entry name" value="Ribosomal_uS4_N"/>
</dbReference>
<dbReference type="InterPro" id="IPR002942">
    <property type="entry name" value="S4_RNA-bd"/>
</dbReference>
<dbReference type="InterPro" id="IPR036986">
    <property type="entry name" value="S4_RNA-bd_sf"/>
</dbReference>
<dbReference type="NCBIfam" id="NF003717">
    <property type="entry name" value="PRK05327.1"/>
    <property type="match status" value="1"/>
</dbReference>
<dbReference type="NCBIfam" id="TIGR01017">
    <property type="entry name" value="rpsD_bact"/>
    <property type="match status" value="1"/>
</dbReference>
<dbReference type="PANTHER" id="PTHR11831">
    <property type="entry name" value="30S 40S RIBOSOMAL PROTEIN"/>
    <property type="match status" value="1"/>
</dbReference>
<dbReference type="PANTHER" id="PTHR11831:SF4">
    <property type="entry name" value="SMALL RIBOSOMAL SUBUNIT PROTEIN US4M"/>
    <property type="match status" value="1"/>
</dbReference>
<dbReference type="Pfam" id="PF00163">
    <property type="entry name" value="Ribosomal_S4"/>
    <property type="match status" value="1"/>
</dbReference>
<dbReference type="Pfam" id="PF01479">
    <property type="entry name" value="S4"/>
    <property type="match status" value="1"/>
</dbReference>
<dbReference type="SMART" id="SM01390">
    <property type="entry name" value="Ribosomal_S4"/>
    <property type="match status" value="1"/>
</dbReference>
<dbReference type="SMART" id="SM00363">
    <property type="entry name" value="S4"/>
    <property type="match status" value="1"/>
</dbReference>
<dbReference type="SUPFAM" id="SSF55174">
    <property type="entry name" value="Alpha-L RNA-binding motif"/>
    <property type="match status" value="1"/>
</dbReference>
<dbReference type="PROSITE" id="PS00632">
    <property type="entry name" value="RIBOSOMAL_S4"/>
    <property type="match status" value="1"/>
</dbReference>
<dbReference type="PROSITE" id="PS50889">
    <property type="entry name" value="S4"/>
    <property type="match status" value="1"/>
</dbReference>
<evidence type="ECO:0000255" key="1">
    <source>
        <dbReference type="HAMAP-Rule" id="MF_01306"/>
    </source>
</evidence>
<evidence type="ECO:0000305" key="2"/>
<organism>
    <name type="scientific">Shewanella denitrificans (strain OS217 / ATCC BAA-1090 / DSM 15013)</name>
    <dbReference type="NCBI Taxonomy" id="318161"/>
    <lineage>
        <taxon>Bacteria</taxon>
        <taxon>Pseudomonadati</taxon>
        <taxon>Pseudomonadota</taxon>
        <taxon>Gammaproteobacteria</taxon>
        <taxon>Alteromonadales</taxon>
        <taxon>Shewanellaceae</taxon>
        <taxon>Shewanella</taxon>
    </lineage>
</organism>
<reference key="1">
    <citation type="submission" date="2006-03" db="EMBL/GenBank/DDBJ databases">
        <title>Complete sequence of Shewanella denitrificans OS217.</title>
        <authorList>
            <consortium name="US DOE Joint Genome Institute"/>
            <person name="Copeland A."/>
            <person name="Lucas S."/>
            <person name="Lapidus A."/>
            <person name="Barry K."/>
            <person name="Detter J.C."/>
            <person name="Glavina del Rio T."/>
            <person name="Hammon N."/>
            <person name="Israni S."/>
            <person name="Dalin E."/>
            <person name="Tice H."/>
            <person name="Pitluck S."/>
            <person name="Brettin T."/>
            <person name="Bruce D."/>
            <person name="Han C."/>
            <person name="Tapia R."/>
            <person name="Gilna P."/>
            <person name="Kiss H."/>
            <person name="Schmutz J."/>
            <person name="Larimer F."/>
            <person name="Land M."/>
            <person name="Hauser L."/>
            <person name="Kyrpides N."/>
            <person name="Lykidis A."/>
            <person name="Richardson P."/>
        </authorList>
    </citation>
    <scope>NUCLEOTIDE SEQUENCE [LARGE SCALE GENOMIC DNA]</scope>
    <source>
        <strain>OS217 / ATCC BAA-1090 / DSM 15013</strain>
    </source>
</reference>
<accession>Q12ST5</accession>